<dbReference type="EC" id="2.7.8.-" evidence="1"/>
<dbReference type="EMBL" id="CP000822">
    <property type="protein sequence ID" value="ABV12463.1"/>
    <property type="molecule type" value="Genomic_DNA"/>
</dbReference>
<dbReference type="RefSeq" id="WP_012132206.1">
    <property type="nucleotide sequence ID" value="NC_009792.1"/>
</dbReference>
<dbReference type="SMR" id="A8AG50"/>
<dbReference type="STRING" id="290338.CKO_01326"/>
<dbReference type="GeneID" id="45135433"/>
<dbReference type="KEGG" id="cko:CKO_01326"/>
<dbReference type="HOGENOM" id="CLU_038053_1_0_6"/>
<dbReference type="OrthoDB" id="9814092at2"/>
<dbReference type="Proteomes" id="UP000008148">
    <property type="component" value="Chromosome"/>
</dbReference>
<dbReference type="GO" id="GO:0005886">
    <property type="term" value="C:plasma membrane"/>
    <property type="evidence" value="ECO:0007669"/>
    <property type="project" value="UniProtKB-SubCell"/>
</dbReference>
<dbReference type="GO" id="GO:0008808">
    <property type="term" value="F:cardiolipin synthase activity"/>
    <property type="evidence" value="ECO:0007669"/>
    <property type="project" value="InterPro"/>
</dbReference>
<dbReference type="GO" id="GO:0032049">
    <property type="term" value="P:cardiolipin biosynthetic process"/>
    <property type="evidence" value="ECO:0007669"/>
    <property type="project" value="InterPro"/>
</dbReference>
<dbReference type="CDD" id="cd09152">
    <property type="entry name" value="PLDc_EcCLS_like_1"/>
    <property type="match status" value="1"/>
</dbReference>
<dbReference type="CDD" id="cd09158">
    <property type="entry name" value="PLDc_EcCLS_like_2"/>
    <property type="match status" value="1"/>
</dbReference>
<dbReference type="FunFam" id="3.30.870.10:FF:000002">
    <property type="entry name" value="Cardiolipin synthase A"/>
    <property type="match status" value="1"/>
</dbReference>
<dbReference type="FunFam" id="3.30.870.10:FF:000003">
    <property type="entry name" value="Cardiolipin synthase A"/>
    <property type="match status" value="1"/>
</dbReference>
<dbReference type="Gene3D" id="3.30.870.10">
    <property type="entry name" value="Endonuclease Chain A"/>
    <property type="match status" value="2"/>
</dbReference>
<dbReference type="HAMAP" id="MF_00190">
    <property type="entry name" value="Cardiolipin_synth_ClsA"/>
    <property type="match status" value="1"/>
</dbReference>
<dbReference type="InterPro" id="IPR022924">
    <property type="entry name" value="Cardiolipin_synthase"/>
</dbReference>
<dbReference type="InterPro" id="IPR030840">
    <property type="entry name" value="CL_synthase_A"/>
</dbReference>
<dbReference type="InterPro" id="IPR027379">
    <property type="entry name" value="CLS_N"/>
</dbReference>
<dbReference type="InterPro" id="IPR025202">
    <property type="entry name" value="PLD-like_dom"/>
</dbReference>
<dbReference type="InterPro" id="IPR001736">
    <property type="entry name" value="PLipase_D/transphosphatidylase"/>
</dbReference>
<dbReference type="NCBIfam" id="TIGR04265">
    <property type="entry name" value="bac_cardiolipin"/>
    <property type="match status" value="1"/>
</dbReference>
<dbReference type="PANTHER" id="PTHR21248">
    <property type="entry name" value="CARDIOLIPIN SYNTHASE"/>
    <property type="match status" value="1"/>
</dbReference>
<dbReference type="PANTHER" id="PTHR21248:SF22">
    <property type="entry name" value="PHOSPHOLIPASE D"/>
    <property type="match status" value="1"/>
</dbReference>
<dbReference type="Pfam" id="PF13091">
    <property type="entry name" value="PLDc_2"/>
    <property type="match status" value="2"/>
</dbReference>
<dbReference type="Pfam" id="PF13396">
    <property type="entry name" value="PLDc_N"/>
    <property type="match status" value="1"/>
</dbReference>
<dbReference type="SMART" id="SM00155">
    <property type="entry name" value="PLDc"/>
    <property type="match status" value="2"/>
</dbReference>
<dbReference type="SUPFAM" id="SSF56024">
    <property type="entry name" value="Phospholipase D/nuclease"/>
    <property type="match status" value="2"/>
</dbReference>
<dbReference type="PROSITE" id="PS50035">
    <property type="entry name" value="PLD"/>
    <property type="match status" value="2"/>
</dbReference>
<accession>A8AG50</accession>
<keyword id="KW-0997">Cell inner membrane</keyword>
<keyword id="KW-1003">Cell membrane</keyword>
<keyword id="KW-0444">Lipid biosynthesis</keyword>
<keyword id="KW-0443">Lipid metabolism</keyword>
<keyword id="KW-0472">Membrane</keyword>
<keyword id="KW-0594">Phospholipid biosynthesis</keyword>
<keyword id="KW-1208">Phospholipid metabolism</keyword>
<keyword id="KW-1185">Reference proteome</keyword>
<keyword id="KW-0677">Repeat</keyword>
<keyword id="KW-0808">Transferase</keyword>
<keyword id="KW-0812">Transmembrane</keyword>
<keyword id="KW-1133">Transmembrane helix</keyword>
<gene>
    <name evidence="1" type="primary">clsA</name>
    <name type="synonym">cls</name>
    <name type="ordered locus">CKO_01326</name>
</gene>
<name>CLSA_CITK8</name>
<comment type="function">
    <text evidence="1">Catalyzes the reversible phosphatidyl group transfer from one phosphatidylglycerol molecule to another to form cardiolipin (CL) (diphosphatidylglycerol) and glycerol.</text>
</comment>
<comment type="catalytic activity">
    <reaction evidence="1">
        <text>2 a 1,2-diacyl-sn-glycero-3-phospho-(1'-sn-glycerol) = a cardiolipin + glycerol</text>
        <dbReference type="Rhea" id="RHEA:31451"/>
        <dbReference type="ChEBI" id="CHEBI:17754"/>
        <dbReference type="ChEBI" id="CHEBI:62237"/>
        <dbReference type="ChEBI" id="CHEBI:64716"/>
    </reaction>
</comment>
<comment type="subcellular location">
    <subcellularLocation>
        <location evidence="1">Cell inner membrane</location>
        <topology evidence="1">Multi-pass membrane protein</topology>
    </subcellularLocation>
</comment>
<comment type="similarity">
    <text evidence="1">Belongs to the phospholipase D family. Cardiolipin synthase subfamily. ClsA sub-subfamily.</text>
</comment>
<protein>
    <recommendedName>
        <fullName evidence="1">Cardiolipin synthase A</fullName>
        <shortName evidence="1">CL synthase</shortName>
        <ecNumber evidence="1">2.7.8.-</ecNumber>
    </recommendedName>
</protein>
<evidence type="ECO:0000255" key="1">
    <source>
        <dbReference type="HAMAP-Rule" id="MF_00190"/>
    </source>
</evidence>
<feature type="chain" id="PRO_1000058479" description="Cardiolipin synthase A">
    <location>
        <begin position="1"/>
        <end position="486"/>
    </location>
</feature>
<feature type="transmembrane region" description="Helical" evidence="1">
    <location>
        <begin position="3"/>
        <end position="23"/>
    </location>
</feature>
<feature type="transmembrane region" description="Helical" evidence="1">
    <location>
        <begin position="38"/>
        <end position="58"/>
    </location>
</feature>
<feature type="domain" description="PLD phosphodiesterase 1" evidence="1">
    <location>
        <begin position="219"/>
        <end position="246"/>
    </location>
</feature>
<feature type="domain" description="PLD phosphodiesterase 2" evidence="1">
    <location>
        <begin position="399"/>
        <end position="426"/>
    </location>
</feature>
<feature type="active site" evidence="1">
    <location>
        <position position="224"/>
    </location>
</feature>
<feature type="active site" evidence="1">
    <location>
        <position position="226"/>
    </location>
</feature>
<feature type="active site" evidence="1">
    <location>
        <position position="231"/>
    </location>
</feature>
<feature type="active site" evidence="1">
    <location>
        <position position="404"/>
    </location>
</feature>
<feature type="active site" evidence="1">
    <location>
        <position position="406"/>
    </location>
</feature>
<feature type="active site" evidence="1">
    <location>
        <position position="411"/>
    </location>
</feature>
<organism>
    <name type="scientific">Citrobacter koseri (strain ATCC BAA-895 / CDC 4225-83 / SGSC4696)</name>
    <dbReference type="NCBI Taxonomy" id="290338"/>
    <lineage>
        <taxon>Bacteria</taxon>
        <taxon>Pseudomonadati</taxon>
        <taxon>Pseudomonadota</taxon>
        <taxon>Gammaproteobacteria</taxon>
        <taxon>Enterobacterales</taxon>
        <taxon>Enterobacteriaceae</taxon>
        <taxon>Citrobacter</taxon>
    </lineage>
</organism>
<sequence length="486" mass="54771">MTTFYTVVSWLVILGYWILIAGVTLRILMKRRAVPSAMAWLLIIYILPLVGIIAYLSFGELHLGKRRAERARAMWPSTAKWLNDLKACKHIFAEENSSVASSLFKLCERRQGIAGVKGNQLQLLTDSDDVMQALIRDIQLARHNIEMVFYIWQPGGMADQVAESLMAAARRGIHCRLMLDSAGSVAFFRSPWAAMMRNAGIEVVEALKVNLMRVFLRRMDLRQHRKMVMIDNYIAYTGSMNMVDPRFFKQDAGVGQWVDLMARMEGPVATAMGIVYSCDWEIETGKRILPPPPDVNIMPFEQASGHTIHTIASGPGFPEDLIHQALLTAAYSAREYLIMTTPYFVPSDDLLHAICTAAQRGVDVSIILPRKNDSMLVGWASRAFFTELLAAGVKIYQFEGGLLHTKSVLVDGELSLVGTVNLDMRSLWLNFEITLVIDDAGFGGDLAAVQDDYISRSRLLDARLWVKRPLWQRITERLFYFFSPLL</sequence>
<proteinExistence type="inferred from homology"/>
<reference key="1">
    <citation type="submission" date="2007-08" db="EMBL/GenBank/DDBJ databases">
        <authorList>
            <consortium name="The Citrobacter koseri Genome Sequencing Project"/>
            <person name="McClelland M."/>
            <person name="Sanderson E.K."/>
            <person name="Porwollik S."/>
            <person name="Spieth J."/>
            <person name="Clifton W.S."/>
            <person name="Latreille P."/>
            <person name="Courtney L."/>
            <person name="Wang C."/>
            <person name="Pepin K."/>
            <person name="Bhonagiri V."/>
            <person name="Nash W."/>
            <person name="Johnson M."/>
            <person name="Thiruvilangam P."/>
            <person name="Wilson R."/>
        </authorList>
    </citation>
    <scope>NUCLEOTIDE SEQUENCE [LARGE SCALE GENOMIC DNA]</scope>
    <source>
        <strain>ATCC BAA-895 / CDC 4225-83 / SGSC4696</strain>
    </source>
</reference>